<organism>
    <name type="scientific">Ajellomyces capsulatus (strain NAm1 / WU24)</name>
    <name type="common">Darling's disease fungus</name>
    <name type="synonym">Histoplasma capsulatum</name>
    <dbReference type="NCBI Taxonomy" id="2059318"/>
    <lineage>
        <taxon>Eukaryota</taxon>
        <taxon>Fungi</taxon>
        <taxon>Dikarya</taxon>
        <taxon>Ascomycota</taxon>
        <taxon>Pezizomycotina</taxon>
        <taxon>Eurotiomycetes</taxon>
        <taxon>Eurotiomycetidae</taxon>
        <taxon>Onygenales</taxon>
        <taxon>Ajellomycetaceae</taxon>
        <taxon>Histoplasma</taxon>
    </lineage>
</organism>
<reference key="1">
    <citation type="journal article" date="2009" name="Genome Res.">
        <title>Comparative genomic analyses of the human fungal pathogens Coccidioides and their relatives.</title>
        <authorList>
            <person name="Sharpton T.J."/>
            <person name="Stajich J.E."/>
            <person name="Rounsley S.D."/>
            <person name="Gardner M.J."/>
            <person name="Wortman J.R."/>
            <person name="Jordar V.S."/>
            <person name="Maiti R."/>
            <person name="Kodira C.D."/>
            <person name="Neafsey D.E."/>
            <person name="Zeng Q."/>
            <person name="Hung C.-Y."/>
            <person name="McMahan C."/>
            <person name="Muszewska A."/>
            <person name="Grynberg M."/>
            <person name="Mandel M.A."/>
            <person name="Kellner E.M."/>
            <person name="Barker B.M."/>
            <person name="Galgiani J.N."/>
            <person name="Orbach M.J."/>
            <person name="Kirkland T.N."/>
            <person name="Cole G.T."/>
            <person name="Henn M.R."/>
            <person name="Birren B.W."/>
            <person name="Taylor J.W."/>
        </authorList>
    </citation>
    <scope>NUCLEOTIDE SEQUENCE [LARGE SCALE GENOMIC DNA]</scope>
    <source>
        <strain>NAm1 / WU24</strain>
    </source>
</reference>
<evidence type="ECO:0000255" key="1">
    <source>
        <dbReference type="HAMAP-Rule" id="MF_03112"/>
    </source>
</evidence>
<accession>A6QRP2</accession>
<name>GET3_AJECN</name>
<feature type="chain" id="PRO_0000388183" description="ATPase GET3">
    <location>
        <begin position="1"/>
        <end position="341"/>
    </location>
</feature>
<feature type="active site" evidence="1">
    <location>
        <position position="63"/>
    </location>
</feature>
<feature type="binding site" evidence="1">
    <location>
        <begin position="34"/>
        <end position="41"/>
    </location>
    <ligand>
        <name>ATP</name>
        <dbReference type="ChEBI" id="CHEBI:30616"/>
    </ligand>
</feature>
<feature type="binding site" evidence="1">
    <location>
        <position position="245"/>
    </location>
    <ligand>
        <name>ATP</name>
        <dbReference type="ChEBI" id="CHEBI:30616"/>
    </ligand>
</feature>
<feature type="binding site" evidence="1">
    <location>
        <position position="272"/>
    </location>
    <ligand>
        <name>ATP</name>
        <dbReference type="ChEBI" id="CHEBI:30616"/>
    </ligand>
</feature>
<feature type="binding site" evidence="1">
    <location>
        <position position="283"/>
    </location>
    <ligand>
        <name>Zn(2+)</name>
        <dbReference type="ChEBI" id="CHEBI:29105"/>
        <note>ligand shared between dimeric partners</note>
    </ligand>
</feature>
<feature type="binding site" evidence="1">
    <location>
        <position position="286"/>
    </location>
    <ligand>
        <name>Zn(2+)</name>
        <dbReference type="ChEBI" id="CHEBI:29105"/>
        <note>ligand shared between dimeric partners</note>
    </ligand>
</feature>
<protein>
    <recommendedName>
        <fullName evidence="1">ATPase GET3</fullName>
        <ecNumber evidence="1">3.6.-.-</ecNumber>
    </recommendedName>
    <alternativeName>
        <fullName evidence="1">Arsenical pump-driving ATPase</fullName>
    </alternativeName>
    <alternativeName>
        <fullName evidence="1">Arsenite-stimulated ATPase</fullName>
    </alternativeName>
    <alternativeName>
        <fullName evidence="1">Golgi to ER traffic protein 3</fullName>
    </alternativeName>
    <alternativeName>
        <fullName evidence="1">Guided entry of tail-anchored proteins 3</fullName>
    </alternativeName>
</protein>
<dbReference type="EC" id="3.6.-.-" evidence="1"/>
<dbReference type="EMBL" id="CH476655">
    <property type="protein sequence ID" value="EDN02184.1"/>
    <property type="molecule type" value="Genomic_DNA"/>
</dbReference>
<dbReference type="SMR" id="A6QRP2"/>
<dbReference type="STRING" id="339724.A6QRP2"/>
<dbReference type="KEGG" id="aje:HCAG_00048"/>
<dbReference type="VEuPathDB" id="FungiDB:HCAG_00048"/>
<dbReference type="HOGENOM" id="CLU_040761_0_0_1"/>
<dbReference type="OMA" id="MDAPYEF"/>
<dbReference type="OrthoDB" id="5393at299071"/>
<dbReference type="Proteomes" id="UP000009297">
    <property type="component" value="Unassembled WGS sequence"/>
</dbReference>
<dbReference type="GO" id="GO:0043529">
    <property type="term" value="C:GET complex"/>
    <property type="evidence" value="ECO:0007669"/>
    <property type="project" value="TreeGrafter"/>
</dbReference>
<dbReference type="GO" id="GO:0005524">
    <property type="term" value="F:ATP binding"/>
    <property type="evidence" value="ECO:0007669"/>
    <property type="project" value="UniProtKB-UniRule"/>
</dbReference>
<dbReference type="GO" id="GO:0016887">
    <property type="term" value="F:ATP hydrolysis activity"/>
    <property type="evidence" value="ECO:0007669"/>
    <property type="project" value="InterPro"/>
</dbReference>
<dbReference type="GO" id="GO:0046872">
    <property type="term" value="F:metal ion binding"/>
    <property type="evidence" value="ECO:0007669"/>
    <property type="project" value="UniProtKB-KW"/>
</dbReference>
<dbReference type="GO" id="GO:0071816">
    <property type="term" value="P:tail-anchored membrane protein insertion into ER membrane"/>
    <property type="evidence" value="ECO:0007669"/>
    <property type="project" value="TreeGrafter"/>
</dbReference>
<dbReference type="CDD" id="cd02035">
    <property type="entry name" value="ArsA"/>
    <property type="match status" value="1"/>
</dbReference>
<dbReference type="FunFam" id="3.40.50.300:FF:000235">
    <property type="entry name" value="ATPase ASNA1"/>
    <property type="match status" value="1"/>
</dbReference>
<dbReference type="Gene3D" id="3.40.50.300">
    <property type="entry name" value="P-loop containing nucleotide triphosphate hydrolases"/>
    <property type="match status" value="1"/>
</dbReference>
<dbReference type="HAMAP" id="MF_03112">
    <property type="entry name" value="Asna1_Get3"/>
    <property type="match status" value="1"/>
</dbReference>
<dbReference type="InterPro" id="IPR025723">
    <property type="entry name" value="Anion-transp_ATPase-like_dom"/>
</dbReference>
<dbReference type="InterPro" id="IPR016300">
    <property type="entry name" value="ATPase_ArsA/GET3"/>
</dbReference>
<dbReference type="InterPro" id="IPR027542">
    <property type="entry name" value="ATPase_ArsA/GET3_euk"/>
</dbReference>
<dbReference type="InterPro" id="IPR027417">
    <property type="entry name" value="P-loop_NTPase"/>
</dbReference>
<dbReference type="NCBIfam" id="TIGR00345">
    <property type="entry name" value="GET3_arsA_TRC40"/>
    <property type="match status" value="1"/>
</dbReference>
<dbReference type="PANTHER" id="PTHR10803">
    <property type="entry name" value="ARSENICAL PUMP-DRIVING ATPASE ARSENITE-TRANSLOCATING ATPASE"/>
    <property type="match status" value="1"/>
</dbReference>
<dbReference type="PANTHER" id="PTHR10803:SF3">
    <property type="entry name" value="ATPASE GET3"/>
    <property type="match status" value="1"/>
</dbReference>
<dbReference type="Pfam" id="PF02374">
    <property type="entry name" value="ArsA_ATPase"/>
    <property type="match status" value="1"/>
</dbReference>
<dbReference type="SUPFAM" id="SSF52540">
    <property type="entry name" value="P-loop containing nucleoside triphosphate hydrolases"/>
    <property type="match status" value="1"/>
</dbReference>
<sequence length="341" mass="37416">MSSTAMVSGDDSLEPTLQSLLDQKTLRWVFVGGKGGVGKTTTSCSLAIQLAKVRKSVLLISTDPAHNLSDAFGQKFGKEARLVDGFDNLSAMEIDPNGSIQDLLATGGDQADDPMAGLGLGGMMQDLAFSIPGVDEAMSFAEVLKQVKSLSYEVIVFDTAPTGHTLRFLQFPTVLEKALAKLSQLSSQFGPMLNSILGARGGLPGGQNLDEILSKMESLRETIGEVNAQFKDADLTTFVCVCIAEFLSLYETERMIQELTSYQIDTHCIVVNQLLFPGKDSSCEQCKARRKMQKKYLNEIEDLYEDFNVVRMPMLVEEVRGKEKLEKFSNMLVNPYVPPEE</sequence>
<proteinExistence type="inferred from homology"/>
<comment type="function">
    <text evidence="1">ATPase required for the post-translational delivery of tail-anchored (TA) proteins to the endoplasmic reticulum. Recognizes and selectively binds the transmembrane domain of TA proteins in the cytosol. This complex then targets to the endoplasmic reticulum by membrane-bound receptors, where the tail-anchored protein is released for insertion. This process is regulated by ATP binding and hydrolysis. ATP binding drives the homodimer towards the closed dimer state, facilitating recognition of newly synthesized TA membrane proteins. ATP hydrolysis is required for insertion. Subsequently, the homodimer reverts towards the open dimer state, lowering its affinity for the membrane-bound receptor, and returning it to the cytosol to initiate a new round of targeting.</text>
</comment>
<comment type="subunit">
    <text evidence="1">Homodimer.</text>
</comment>
<comment type="subcellular location">
    <subcellularLocation>
        <location evidence="1">Cytoplasm</location>
    </subcellularLocation>
    <subcellularLocation>
        <location evidence="1">Endoplasmic reticulum</location>
    </subcellularLocation>
</comment>
<comment type="similarity">
    <text evidence="1">Belongs to the arsA ATPase family.</text>
</comment>
<gene>
    <name evidence="1" type="primary">GET3</name>
    <name type="ORF">HCAG_00048</name>
</gene>
<keyword id="KW-0067">ATP-binding</keyword>
<keyword id="KW-0963">Cytoplasm</keyword>
<keyword id="KW-0256">Endoplasmic reticulum</keyword>
<keyword id="KW-0378">Hydrolase</keyword>
<keyword id="KW-0479">Metal-binding</keyword>
<keyword id="KW-0547">Nucleotide-binding</keyword>
<keyword id="KW-1185">Reference proteome</keyword>
<keyword id="KW-0813">Transport</keyword>
<keyword id="KW-0862">Zinc</keyword>